<organism>
    <name type="scientific">Renibacterium salmoninarum (strain ATCC 33209 / DSM 20767 / JCM 11484 / NBRC 15589 / NCIMB 2235)</name>
    <dbReference type="NCBI Taxonomy" id="288705"/>
    <lineage>
        <taxon>Bacteria</taxon>
        <taxon>Bacillati</taxon>
        <taxon>Actinomycetota</taxon>
        <taxon>Actinomycetes</taxon>
        <taxon>Micrococcales</taxon>
        <taxon>Micrococcaceae</taxon>
        <taxon>Renibacterium</taxon>
    </lineage>
</organism>
<evidence type="ECO:0000255" key="1">
    <source>
        <dbReference type="HAMAP-Rule" id="MF_01615"/>
    </source>
</evidence>
<feature type="chain" id="PRO_0000335572" description="Pyridoxal 5'-phosphate synthase subunit PdxT">
    <location>
        <begin position="1"/>
        <end position="227"/>
    </location>
</feature>
<feature type="active site" description="Nucleophile" evidence="1">
    <location>
        <position position="84"/>
    </location>
</feature>
<feature type="active site" description="Charge relay system" evidence="1">
    <location>
        <position position="189"/>
    </location>
</feature>
<feature type="active site" description="Charge relay system" evidence="1">
    <location>
        <position position="191"/>
    </location>
</feature>
<feature type="binding site" evidence="1">
    <location>
        <begin position="52"/>
        <end position="54"/>
    </location>
    <ligand>
        <name>L-glutamine</name>
        <dbReference type="ChEBI" id="CHEBI:58359"/>
    </ligand>
</feature>
<feature type="binding site" evidence="1">
    <location>
        <position position="118"/>
    </location>
    <ligand>
        <name>L-glutamine</name>
        <dbReference type="ChEBI" id="CHEBI:58359"/>
    </ligand>
</feature>
<feature type="binding site" evidence="1">
    <location>
        <begin position="149"/>
        <end position="150"/>
    </location>
    <ligand>
        <name>L-glutamine</name>
        <dbReference type="ChEBI" id="CHEBI:58359"/>
    </ligand>
</feature>
<proteinExistence type="inferred from homology"/>
<gene>
    <name evidence="1" type="primary">pdxT</name>
    <name type="ordered locus">RSal33209_2003</name>
</gene>
<reference key="1">
    <citation type="journal article" date="2008" name="J. Bacteriol.">
        <title>Genome sequence of the fish pathogen Renibacterium salmoninarum suggests reductive evolution away from an environmental Arthrobacter ancestor.</title>
        <authorList>
            <person name="Wiens G.D."/>
            <person name="Rockey D.D."/>
            <person name="Wu Z."/>
            <person name="Chang J."/>
            <person name="Levy R."/>
            <person name="Crane S."/>
            <person name="Chen D.S."/>
            <person name="Capri G.R."/>
            <person name="Burnett J.R."/>
            <person name="Sudheesh P.S."/>
            <person name="Schipma M.J."/>
            <person name="Burd H."/>
            <person name="Bhattacharyya A."/>
            <person name="Rhodes L.D."/>
            <person name="Kaul R."/>
            <person name="Strom M.S."/>
        </authorList>
    </citation>
    <scope>NUCLEOTIDE SEQUENCE [LARGE SCALE GENOMIC DNA]</scope>
    <source>
        <strain>ATCC 33209 / DSM 20767 / JCM 11484 / NBRC 15589 / NCIMB 2235</strain>
    </source>
</reference>
<comment type="function">
    <text evidence="1">Catalyzes the hydrolysis of glutamine to glutamate and ammonia as part of the biosynthesis of pyridoxal 5'-phosphate. The resulting ammonia molecule is channeled to the active site of PdxS.</text>
</comment>
<comment type="catalytic activity">
    <reaction evidence="1">
        <text>aldehydo-D-ribose 5-phosphate + D-glyceraldehyde 3-phosphate + L-glutamine = pyridoxal 5'-phosphate + L-glutamate + phosphate + 3 H2O + H(+)</text>
        <dbReference type="Rhea" id="RHEA:31507"/>
        <dbReference type="ChEBI" id="CHEBI:15377"/>
        <dbReference type="ChEBI" id="CHEBI:15378"/>
        <dbReference type="ChEBI" id="CHEBI:29985"/>
        <dbReference type="ChEBI" id="CHEBI:43474"/>
        <dbReference type="ChEBI" id="CHEBI:58273"/>
        <dbReference type="ChEBI" id="CHEBI:58359"/>
        <dbReference type="ChEBI" id="CHEBI:59776"/>
        <dbReference type="ChEBI" id="CHEBI:597326"/>
        <dbReference type="EC" id="4.3.3.6"/>
    </reaction>
</comment>
<comment type="catalytic activity">
    <reaction evidence="1">
        <text>L-glutamine + H2O = L-glutamate + NH4(+)</text>
        <dbReference type="Rhea" id="RHEA:15889"/>
        <dbReference type="ChEBI" id="CHEBI:15377"/>
        <dbReference type="ChEBI" id="CHEBI:28938"/>
        <dbReference type="ChEBI" id="CHEBI:29985"/>
        <dbReference type="ChEBI" id="CHEBI:58359"/>
        <dbReference type="EC" id="3.5.1.2"/>
    </reaction>
</comment>
<comment type="pathway">
    <text evidence="1">Cofactor biosynthesis; pyridoxal 5'-phosphate biosynthesis.</text>
</comment>
<comment type="subunit">
    <text evidence="1">In the presence of PdxS, forms a dodecamer of heterodimers. Only shows activity in the heterodimer.</text>
</comment>
<comment type="similarity">
    <text evidence="1">Belongs to the glutaminase PdxT/SNO family.</text>
</comment>
<name>PDXT_RENSM</name>
<sequence length="227" mass="24540">MTIGRTLRAGVLALQGDVREHLAALEACGAEAVPIRRASELADLDGLVLPGGESTAIDRLIRAFELSEPLKAFIASGKPVYGSCSGMILLADRIADPALDRDGAPQRTLGGLDVTVRRNAFGRQRDSFETELKFDSLSDSERPVHAVFIRAPWIEQAGSEVEVLAVVRIEGIDRAVAVRSGNLLATSFHPEVLVQESETSELRVHELLVSMMASRLSQDANQAESRK</sequence>
<keyword id="KW-0315">Glutamine amidotransferase</keyword>
<keyword id="KW-0378">Hydrolase</keyword>
<keyword id="KW-0456">Lyase</keyword>
<keyword id="KW-0663">Pyridoxal phosphate</keyword>
<keyword id="KW-1185">Reference proteome</keyword>
<protein>
    <recommendedName>
        <fullName evidence="1">Pyridoxal 5'-phosphate synthase subunit PdxT</fullName>
        <ecNumber evidence="1">4.3.3.6</ecNumber>
    </recommendedName>
    <alternativeName>
        <fullName evidence="1">Pdx2</fullName>
    </alternativeName>
    <alternativeName>
        <fullName evidence="1">Pyridoxal 5'-phosphate synthase glutaminase subunit</fullName>
        <ecNumber evidence="1">3.5.1.2</ecNumber>
    </alternativeName>
</protein>
<dbReference type="EC" id="4.3.3.6" evidence="1"/>
<dbReference type="EC" id="3.5.1.2" evidence="1"/>
<dbReference type="EMBL" id="CP000910">
    <property type="protein sequence ID" value="ABY23736.1"/>
    <property type="molecule type" value="Genomic_DNA"/>
</dbReference>
<dbReference type="RefSeq" id="WP_012245406.1">
    <property type="nucleotide sequence ID" value="NC_010168.1"/>
</dbReference>
<dbReference type="SMR" id="A9WSE8"/>
<dbReference type="STRING" id="288705.RSal33209_2003"/>
<dbReference type="KEGG" id="rsa:RSal33209_2003"/>
<dbReference type="eggNOG" id="COG0311">
    <property type="taxonomic scope" value="Bacteria"/>
</dbReference>
<dbReference type="HOGENOM" id="CLU_069674_2_0_11"/>
<dbReference type="UniPathway" id="UPA00245"/>
<dbReference type="Proteomes" id="UP000002007">
    <property type="component" value="Chromosome"/>
</dbReference>
<dbReference type="GO" id="GO:0005829">
    <property type="term" value="C:cytosol"/>
    <property type="evidence" value="ECO:0007669"/>
    <property type="project" value="TreeGrafter"/>
</dbReference>
<dbReference type="GO" id="GO:1903600">
    <property type="term" value="C:glutaminase complex"/>
    <property type="evidence" value="ECO:0007669"/>
    <property type="project" value="TreeGrafter"/>
</dbReference>
<dbReference type="GO" id="GO:0004359">
    <property type="term" value="F:glutaminase activity"/>
    <property type="evidence" value="ECO:0007669"/>
    <property type="project" value="UniProtKB-UniRule"/>
</dbReference>
<dbReference type="GO" id="GO:0036381">
    <property type="term" value="F:pyridoxal 5'-phosphate synthase (glutamine hydrolysing) activity"/>
    <property type="evidence" value="ECO:0007669"/>
    <property type="project" value="UniProtKB-UniRule"/>
</dbReference>
<dbReference type="GO" id="GO:0006543">
    <property type="term" value="P:glutamine catabolic process"/>
    <property type="evidence" value="ECO:0007669"/>
    <property type="project" value="UniProtKB-UniRule"/>
</dbReference>
<dbReference type="GO" id="GO:0042823">
    <property type="term" value="P:pyridoxal phosphate biosynthetic process"/>
    <property type="evidence" value="ECO:0007669"/>
    <property type="project" value="UniProtKB-UniRule"/>
</dbReference>
<dbReference type="GO" id="GO:0008614">
    <property type="term" value="P:pyridoxine metabolic process"/>
    <property type="evidence" value="ECO:0007669"/>
    <property type="project" value="TreeGrafter"/>
</dbReference>
<dbReference type="CDD" id="cd01749">
    <property type="entry name" value="GATase1_PB"/>
    <property type="match status" value="1"/>
</dbReference>
<dbReference type="FunFam" id="3.40.50.880:FF:000010">
    <property type="entry name" value="uncharacterized protein LOC100176842 isoform X2"/>
    <property type="match status" value="1"/>
</dbReference>
<dbReference type="Gene3D" id="3.40.50.880">
    <property type="match status" value="1"/>
</dbReference>
<dbReference type="HAMAP" id="MF_01615">
    <property type="entry name" value="PdxT"/>
    <property type="match status" value="1"/>
</dbReference>
<dbReference type="InterPro" id="IPR029062">
    <property type="entry name" value="Class_I_gatase-like"/>
</dbReference>
<dbReference type="InterPro" id="IPR002161">
    <property type="entry name" value="PdxT/SNO"/>
</dbReference>
<dbReference type="InterPro" id="IPR021196">
    <property type="entry name" value="PdxT/SNO_CS"/>
</dbReference>
<dbReference type="NCBIfam" id="TIGR03800">
    <property type="entry name" value="PLP_synth_Pdx2"/>
    <property type="match status" value="1"/>
</dbReference>
<dbReference type="PANTHER" id="PTHR31559">
    <property type="entry name" value="PYRIDOXAL 5'-PHOSPHATE SYNTHASE SUBUNIT SNO"/>
    <property type="match status" value="1"/>
</dbReference>
<dbReference type="PANTHER" id="PTHR31559:SF0">
    <property type="entry name" value="PYRIDOXAL 5'-PHOSPHATE SYNTHASE SUBUNIT SNO1-RELATED"/>
    <property type="match status" value="1"/>
</dbReference>
<dbReference type="Pfam" id="PF01174">
    <property type="entry name" value="SNO"/>
    <property type="match status" value="1"/>
</dbReference>
<dbReference type="PIRSF" id="PIRSF005639">
    <property type="entry name" value="Glut_amidoT_SNO"/>
    <property type="match status" value="1"/>
</dbReference>
<dbReference type="SUPFAM" id="SSF52317">
    <property type="entry name" value="Class I glutamine amidotransferase-like"/>
    <property type="match status" value="1"/>
</dbReference>
<dbReference type="PROSITE" id="PS01236">
    <property type="entry name" value="PDXT_SNO_1"/>
    <property type="match status" value="1"/>
</dbReference>
<dbReference type="PROSITE" id="PS51130">
    <property type="entry name" value="PDXT_SNO_2"/>
    <property type="match status" value="1"/>
</dbReference>
<accession>A9WSE8</accession>